<dbReference type="EMBL" id="CP000941">
    <property type="protein sequence ID" value="ACA11317.1"/>
    <property type="molecule type" value="Genomic_DNA"/>
</dbReference>
<dbReference type="RefSeq" id="WP_012337607.1">
    <property type="nucleotide sequence ID" value="NC_010513.1"/>
</dbReference>
<dbReference type="SMR" id="B0U1Z0"/>
<dbReference type="KEGG" id="xfm:Xfasm12_0294"/>
<dbReference type="HOGENOM" id="CLU_019375_7_0_6"/>
<dbReference type="GO" id="GO:0005886">
    <property type="term" value="C:plasma membrane"/>
    <property type="evidence" value="ECO:0007669"/>
    <property type="project" value="UniProtKB-SubCell"/>
</dbReference>
<dbReference type="GO" id="GO:0015138">
    <property type="term" value="F:fumarate transmembrane transporter activity"/>
    <property type="evidence" value="ECO:0007669"/>
    <property type="project" value="TreeGrafter"/>
</dbReference>
<dbReference type="GO" id="GO:0015366">
    <property type="term" value="F:malate:proton symporter activity"/>
    <property type="evidence" value="ECO:0007669"/>
    <property type="project" value="TreeGrafter"/>
</dbReference>
<dbReference type="GO" id="GO:0015141">
    <property type="term" value="F:succinate transmembrane transporter activity"/>
    <property type="evidence" value="ECO:0007669"/>
    <property type="project" value="TreeGrafter"/>
</dbReference>
<dbReference type="GO" id="GO:0070778">
    <property type="term" value="P:L-aspartate transmembrane transport"/>
    <property type="evidence" value="ECO:0007669"/>
    <property type="project" value="TreeGrafter"/>
</dbReference>
<dbReference type="FunFam" id="1.10.3860.10:FF:000001">
    <property type="entry name" value="C4-dicarboxylate transport protein"/>
    <property type="match status" value="1"/>
</dbReference>
<dbReference type="Gene3D" id="1.10.3860.10">
    <property type="entry name" value="Sodium:dicarboxylate symporter"/>
    <property type="match status" value="1"/>
</dbReference>
<dbReference type="HAMAP" id="MF_01300">
    <property type="entry name" value="C4_dicarb_transport"/>
    <property type="match status" value="1"/>
</dbReference>
<dbReference type="InterPro" id="IPR023954">
    <property type="entry name" value="C4_dicarb_transport"/>
</dbReference>
<dbReference type="InterPro" id="IPR001991">
    <property type="entry name" value="Na-dicarboxylate_symporter"/>
</dbReference>
<dbReference type="InterPro" id="IPR018107">
    <property type="entry name" value="Na-dicarboxylate_symporter_CS"/>
</dbReference>
<dbReference type="InterPro" id="IPR036458">
    <property type="entry name" value="Na:dicarbo_symporter_sf"/>
</dbReference>
<dbReference type="NCBIfam" id="NF002461">
    <property type="entry name" value="PRK01663.1"/>
    <property type="match status" value="1"/>
</dbReference>
<dbReference type="PANTHER" id="PTHR42865:SF1">
    <property type="entry name" value="AEROBIC C4-DICARBOXYLATE TRANSPORT PROTEIN"/>
    <property type="match status" value="1"/>
</dbReference>
<dbReference type="PANTHER" id="PTHR42865">
    <property type="entry name" value="PROTON/GLUTAMATE-ASPARTATE SYMPORTER"/>
    <property type="match status" value="1"/>
</dbReference>
<dbReference type="Pfam" id="PF00375">
    <property type="entry name" value="SDF"/>
    <property type="match status" value="1"/>
</dbReference>
<dbReference type="PRINTS" id="PR00173">
    <property type="entry name" value="EDTRNSPORT"/>
</dbReference>
<dbReference type="SUPFAM" id="SSF118215">
    <property type="entry name" value="Proton glutamate symport protein"/>
    <property type="match status" value="1"/>
</dbReference>
<dbReference type="PROSITE" id="PS00713">
    <property type="entry name" value="NA_DICARBOXYL_SYMP_1"/>
    <property type="match status" value="1"/>
</dbReference>
<dbReference type="PROSITE" id="PS00714">
    <property type="entry name" value="NA_DICARBOXYL_SYMP_2"/>
    <property type="match status" value="1"/>
</dbReference>
<feature type="chain" id="PRO_1000140476" description="C4-dicarboxylate transport protein">
    <location>
        <begin position="1"/>
        <end position="449"/>
    </location>
</feature>
<feature type="transmembrane region" description="Helical" evidence="1">
    <location>
        <begin position="18"/>
        <end position="38"/>
    </location>
</feature>
<feature type="transmembrane region" description="Helical" evidence="1">
    <location>
        <begin position="61"/>
        <end position="81"/>
    </location>
</feature>
<feature type="transmembrane region" description="Helical" evidence="1">
    <location>
        <begin position="93"/>
        <end position="113"/>
    </location>
</feature>
<feature type="transmembrane region" description="Helical" evidence="1">
    <location>
        <begin position="159"/>
        <end position="179"/>
    </location>
</feature>
<feature type="transmembrane region" description="Helical" evidence="1">
    <location>
        <begin position="202"/>
        <end position="222"/>
    </location>
</feature>
<feature type="transmembrane region" description="Helical" evidence="1">
    <location>
        <begin position="244"/>
        <end position="264"/>
    </location>
</feature>
<feature type="transmembrane region" description="Helical" evidence="1">
    <location>
        <begin position="311"/>
        <end position="331"/>
    </location>
</feature>
<feature type="transmembrane region" description="Helical" evidence="1">
    <location>
        <begin position="369"/>
        <end position="389"/>
    </location>
</feature>
<name>DCTA_XYLFM</name>
<keyword id="KW-0997">Cell inner membrane</keyword>
<keyword id="KW-1003">Cell membrane</keyword>
<keyword id="KW-0472">Membrane</keyword>
<keyword id="KW-0769">Symport</keyword>
<keyword id="KW-0812">Transmembrane</keyword>
<keyword id="KW-1133">Transmembrane helix</keyword>
<keyword id="KW-0813">Transport</keyword>
<protein>
    <recommendedName>
        <fullName evidence="1">C4-dicarboxylate transport protein</fullName>
    </recommendedName>
</protein>
<accession>B0U1Z0</accession>
<sequence>MHPSSRANGPAPHKPYNPFYLQLYFWVIIAIILGALLGHCYPAVGQQLKPLGDAFIKLVKMIISPVIFLTIVTGIASVAHVGTVARVFGKAMVYFLFFSTLALLLGLVVAHVVHPGAGMNINPVDLHQGEIANYVEKSHDLTLVGFLMDIIPKTLLSPFVGDNILQVLFVAVLFGIALALAGERGKPVLNLLDALTVPVFKLVQMLMKMAPIGAFGAIAFTIGKYGVDSLVNLGWLVGSFYLTSLLFVLVILGAVSWLCGFSILKLIRYLKAELLLVLGTSSSESALPSLMEKMVQAGCRKSVVGLVVPTGYSFNLDGTNIYMTLAALFIAQATNTELTPAHQLALFLVAMLSSKGAAGVSGAGFITLAATLAVVPEVPIAGMALILGVDRFMSECRSLTNFIGNAVATLVVSRWENALNHEQLKIALDGNEAAYQSLHAKDAEPSLSR</sequence>
<comment type="function">
    <text evidence="1">Responsible for the transport of dicarboxylates such as succinate, fumarate, and malate from the periplasm across the membrane.</text>
</comment>
<comment type="subcellular location">
    <subcellularLocation>
        <location evidence="1">Cell inner membrane</location>
        <topology evidence="1">Multi-pass membrane protein</topology>
    </subcellularLocation>
</comment>
<comment type="similarity">
    <text evidence="1">Belongs to the dicarboxylate/amino acid:cation symporter (DAACS) (TC 2.A.23) family.</text>
</comment>
<proteinExistence type="inferred from homology"/>
<evidence type="ECO:0000255" key="1">
    <source>
        <dbReference type="HAMAP-Rule" id="MF_01300"/>
    </source>
</evidence>
<gene>
    <name evidence="1" type="primary">dctA</name>
    <name type="ordered locus">Xfasm12_0294</name>
</gene>
<reference key="1">
    <citation type="journal article" date="2010" name="J. Bacteriol.">
        <title>Whole genome sequences of two Xylella fastidiosa strains (M12 and M23) causing almond leaf scorch disease in California.</title>
        <authorList>
            <person name="Chen J."/>
            <person name="Xie G."/>
            <person name="Han S."/>
            <person name="Chertkov O."/>
            <person name="Sims D."/>
            <person name="Civerolo E.L."/>
        </authorList>
    </citation>
    <scope>NUCLEOTIDE SEQUENCE [LARGE SCALE GENOMIC DNA]</scope>
    <source>
        <strain>M12</strain>
    </source>
</reference>
<organism>
    <name type="scientific">Xylella fastidiosa (strain M12)</name>
    <dbReference type="NCBI Taxonomy" id="405440"/>
    <lineage>
        <taxon>Bacteria</taxon>
        <taxon>Pseudomonadati</taxon>
        <taxon>Pseudomonadota</taxon>
        <taxon>Gammaproteobacteria</taxon>
        <taxon>Lysobacterales</taxon>
        <taxon>Lysobacteraceae</taxon>
        <taxon>Xylella</taxon>
    </lineage>
</organism>